<accession>P0CU10</accession>
<accession>Q9P3E8</accession>
<comment type="subcellular location">
    <subcellularLocation>
        <location evidence="2">Golgi apparatus</location>
    </subcellularLocation>
    <subcellularLocation>
        <location evidence="1">Membrane</location>
        <topology evidence="1">Multi-pass membrane protein</topology>
    </subcellularLocation>
</comment>
<comment type="similarity">
    <text evidence="3">Belongs to the major facilitator superfamily. CAR1 family.</text>
</comment>
<sequence length="485" mass="54087">MKEESILKKCDSSSIKHVPSTPLETNCPDKYNPKTWPIRLKVRNVIVISSMTFLNQYGDSVFAPSISNIAEQFHASRTLVTLGATLYTLGILFGNLIFAPLSEQFGRRPIYLIGYSVFALLQIPIALSVNLAMFLVFRFFSGLFGSVGLSNGSGSLADLFEKKDRGKYMVIYFTVLSIGPGIAPIISGFISQSSIGWQWEFWILLILSGFNLFWAFLLLKETYPPVLNRKKFEKYGEIGENEPVALRLTGKQLLIKLLILLSMKKPISILLSQPILICVACTIGSIYGMINLVLIAFSEVWKSSYDFSPGISGLMYISITLGLFSAVFIAMPINQKFYSYLVKRNGGEGEPEFRLPMGFIGITLFEIGILLFGWTARYKIFWFVPTIGSAIMGGGYIMTSNPLNMYVVDSYGIYSASASAGVKIFQLLLGAIFPLFAESLFRRLNYGWGCTLLAFILLACGCSLPILFKYGKQIRNLRPFDPSKY</sequence>
<evidence type="ECO:0000255" key="1"/>
<evidence type="ECO:0000269" key="2">
    <source>
    </source>
</evidence>
<evidence type="ECO:0000305" key="3"/>
<organism>
    <name type="scientific">Schizosaccharomyces pombe (strain 972 / ATCC 24843)</name>
    <name type="common">Fission yeast</name>
    <dbReference type="NCBI Taxonomy" id="284812"/>
    <lineage>
        <taxon>Eukaryota</taxon>
        <taxon>Fungi</taxon>
        <taxon>Dikarya</taxon>
        <taxon>Ascomycota</taxon>
        <taxon>Taphrinomycotina</taxon>
        <taxon>Schizosaccharomycetes</taxon>
        <taxon>Schizosaccharomycetales</taxon>
        <taxon>Schizosaccharomycetaceae</taxon>
        <taxon>Schizosaccharomyces</taxon>
    </lineage>
</organism>
<feature type="chain" id="PRO_0000372790" description="Uncharacterized transporter SPAC750.02c">
    <location>
        <begin position="1"/>
        <end position="485"/>
    </location>
</feature>
<feature type="transmembrane region" description="Helical" evidence="1">
    <location>
        <begin position="79"/>
        <end position="99"/>
    </location>
</feature>
<feature type="transmembrane region" description="Helical" evidence="1">
    <location>
        <begin position="117"/>
        <end position="137"/>
    </location>
</feature>
<feature type="transmembrane region" description="Helical" evidence="1">
    <location>
        <begin position="139"/>
        <end position="159"/>
    </location>
</feature>
<feature type="transmembrane region" description="Helical" evidence="1">
    <location>
        <begin position="170"/>
        <end position="190"/>
    </location>
</feature>
<feature type="transmembrane region" description="Helical" evidence="1">
    <location>
        <begin position="199"/>
        <end position="219"/>
    </location>
</feature>
<feature type="transmembrane region" description="Helical" evidence="1">
    <location>
        <begin position="275"/>
        <end position="295"/>
    </location>
</feature>
<feature type="transmembrane region" description="Helical" evidence="1">
    <location>
        <begin position="313"/>
        <end position="333"/>
    </location>
</feature>
<feature type="transmembrane region" description="Helical" evidence="1">
    <location>
        <begin position="355"/>
        <end position="375"/>
    </location>
</feature>
<feature type="transmembrane region" description="Helical" evidence="1">
    <location>
        <begin position="380"/>
        <end position="400"/>
    </location>
</feature>
<feature type="transmembrane region" description="Helical" evidence="1">
    <location>
        <begin position="421"/>
        <end position="441"/>
    </location>
</feature>
<feature type="transmembrane region" description="Helical" evidence="1">
    <location>
        <begin position="448"/>
        <end position="468"/>
    </location>
</feature>
<keyword id="KW-0333">Golgi apparatus</keyword>
<keyword id="KW-0472">Membrane</keyword>
<keyword id="KW-1185">Reference proteome</keyword>
<keyword id="KW-0812">Transmembrane</keyword>
<keyword id="KW-1133">Transmembrane helix</keyword>
<keyword id="KW-0813">Transport</keyword>
<name>YLZ2_SCHPO</name>
<reference key="1">
    <citation type="journal article" date="2002" name="Nature">
        <title>The genome sequence of Schizosaccharomyces pombe.</title>
        <authorList>
            <person name="Wood V."/>
            <person name="Gwilliam R."/>
            <person name="Rajandream M.A."/>
            <person name="Lyne M.H."/>
            <person name="Lyne R."/>
            <person name="Stewart A."/>
            <person name="Sgouros J.G."/>
            <person name="Peat N."/>
            <person name="Hayles J."/>
            <person name="Baker S.G."/>
            <person name="Basham D."/>
            <person name="Bowman S."/>
            <person name="Brooks K."/>
            <person name="Brown D."/>
            <person name="Brown S."/>
            <person name="Chillingworth T."/>
            <person name="Churcher C.M."/>
            <person name="Collins M."/>
            <person name="Connor R."/>
            <person name="Cronin A."/>
            <person name="Davis P."/>
            <person name="Feltwell T."/>
            <person name="Fraser A."/>
            <person name="Gentles S."/>
            <person name="Goble A."/>
            <person name="Hamlin N."/>
            <person name="Harris D.E."/>
            <person name="Hidalgo J."/>
            <person name="Hodgson G."/>
            <person name="Holroyd S."/>
            <person name="Hornsby T."/>
            <person name="Howarth S."/>
            <person name="Huckle E.J."/>
            <person name="Hunt S."/>
            <person name="Jagels K."/>
            <person name="James K.D."/>
            <person name="Jones L."/>
            <person name="Jones M."/>
            <person name="Leather S."/>
            <person name="McDonald S."/>
            <person name="McLean J."/>
            <person name="Mooney P."/>
            <person name="Moule S."/>
            <person name="Mungall K.L."/>
            <person name="Murphy L.D."/>
            <person name="Niblett D."/>
            <person name="Odell C."/>
            <person name="Oliver K."/>
            <person name="O'Neil S."/>
            <person name="Pearson D."/>
            <person name="Quail M.A."/>
            <person name="Rabbinowitsch E."/>
            <person name="Rutherford K.M."/>
            <person name="Rutter S."/>
            <person name="Saunders D."/>
            <person name="Seeger K."/>
            <person name="Sharp S."/>
            <person name="Skelton J."/>
            <person name="Simmonds M.N."/>
            <person name="Squares R."/>
            <person name="Squares S."/>
            <person name="Stevens K."/>
            <person name="Taylor K."/>
            <person name="Taylor R.G."/>
            <person name="Tivey A."/>
            <person name="Walsh S.V."/>
            <person name="Warren T."/>
            <person name="Whitehead S."/>
            <person name="Woodward J.R."/>
            <person name="Volckaert G."/>
            <person name="Aert R."/>
            <person name="Robben J."/>
            <person name="Grymonprez B."/>
            <person name="Weltjens I."/>
            <person name="Vanstreels E."/>
            <person name="Rieger M."/>
            <person name="Schaefer M."/>
            <person name="Mueller-Auer S."/>
            <person name="Gabel C."/>
            <person name="Fuchs M."/>
            <person name="Duesterhoeft A."/>
            <person name="Fritzc C."/>
            <person name="Holzer E."/>
            <person name="Moestl D."/>
            <person name="Hilbert H."/>
            <person name="Borzym K."/>
            <person name="Langer I."/>
            <person name="Beck A."/>
            <person name="Lehrach H."/>
            <person name="Reinhardt R."/>
            <person name="Pohl T.M."/>
            <person name="Eger P."/>
            <person name="Zimmermann W."/>
            <person name="Wedler H."/>
            <person name="Wambutt R."/>
            <person name="Purnelle B."/>
            <person name="Goffeau A."/>
            <person name="Cadieu E."/>
            <person name="Dreano S."/>
            <person name="Gloux S."/>
            <person name="Lelaure V."/>
            <person name="Mottier S."/>
            <person name="Galibert F."/>
            <person name="Aves S.J."/>
            <person name="Xiang Z."/>
            <person name="Hunt C."/>
            <person name="Moore K."/>
            <person name="Hurst S.M."/>
            <person name="Lucas M."/>
            <person name="Rochet M."/>
            <person name="Gaillardin C."/>
            <person name="Tallada V.A."/>
            <person name="Garzon A."/>
            <person name="Thode G."/>
            <person name="Daga R.R."/>
            <person name="Cruzado L."/>
            <person name="Jimenez J."/>
            <person name="Sanchez M."/>
            <person name="del Rey F."/>
            <person name="Benito J."/>
            <person name="Dominguez A."/>
            <person name="Revuelta J.L."/>
            <person name="Moreno S."/>
            <person name="Armstrong J."/>
            <person name="Forsburg S.L."/>
            <person name="Cerutti L."/>
            <person name="Lowe T."/>
            <person name="McCombie W.R."/>
            <person name="Paulsen I."/>
            <person name="Potashkin J."/>
            <person name="Shpakovski G.V."/>
            <person name="Ussery D."/>
            <person name="Barrell B.G."/>
            <person name="Nurse P."/>
        </authorList>
    </citation>
    <scope>NUCLEOTIDE SEQUENCE [LARGE SCALE GENOMIC DNA]</scope>
    <source>
        <strain>972 / ATCC 24843</strain>
    </source>
</reference>
<reference key="2">
    <citation type="journal article" date="2006" name="Nat. Biotechnol.">
        <title>ORFeome cloning and global analysis of protein localization in the fission yeast Schizosaccharomyces pombe.</title>
        <authorList>
            <person name="Matsuyama A."/>
            <person name="Arai R."/>
            <person name="Yashiroda Y."/>
            <person name="Shirai A."/>
            <person name="Kamata A."/>
            <person name="Sekido S."/>
            <person name="Kobayashi Y."/>
            <person name="Hashimoto A."/>
            <person name="Hamamoto M."/>
            <person name="Hiraoka Y."/>
            <person name="Horinouchi S."/>
            <person name="Yoshida M."/>
        </authorList>
    </citation>
    <scope>SUBCELLULAR LOCATION [LARGE SCALE ANALYSIS]</scope>
</reference>
<gene>
    <name type="ORF">SPAC750.02c</name>
</gene>
<proteinExistence type="inferred from homology"/>
<protein>
    <recommendedName>
        <fullName>Uncharacterized transporter SPAC750.02c</fullName>
    </recommendedName>
</protein>
<dbReference type="EMBL" id="CU329670">
    <property type="protein sequence ID" value="CAB98253.1"/>
    <property type="molecule type" value="Genomic_DNA"/>
</dbReference>
<dbReference type="RefSeq" id="NP_595028.1">
    <property type="nucleotide sequence ID" value="NM_001020458.2"/>
</dbReference>
<dbReference type="RefSeq" id="NP_596862.1">
    <property type="nucleotide sequence ID" value="NM_001023885.1"/>
</dbReference>
<dbReference type="SMR" id="P0CU10"/>
<dbReference type="FunCoup" id="P0CU10">
    <property type="interactions" value="7"/>
</dbReference>
<dbReference type="STRING" id="284812.P0CU10"/>
<dbReference type="iPTMnet" id="P0CU10"/>
<dbReference type="EnsemblFungi" id="SPAC750.02c.1">
    <property type="protein sequence ID" value="SPAC750.02c.1:pep"/>
    <property type="gene ID" value="SPAC750.02c"/>
</dbReference>
<dbReference type="EnsemblFungi" id="SPBPB2B2.16c.1">
    <property type="protein sequence ID" value="SPBPB2B2.16c.1:pep"/>
    <property type="gene ID" value="SPBPB2B2.16c"/>
</dbReference>
<dbReference type="KEGG" id="spo:2541400"/>
<dbReference type="KEGG" id="spo:2541534"/>
<dbReference type="PomBase" id="SPAC750.02c"/>
<dbReference type="VEuPathDB" id="FungiDB:SPAC750.02c"/>
<dbReference type="VEuPathDB" id="FungiDB:SPBPB2B2.16c"/>
<dbReference type="InParanoid" id="P0CU10"/>
<dbReference type="OMA" id="YHASTTI"/>
<dbReference type="PhylomeDB" id="P0CU10"/>
<dbReference type="PRO" id="PR:P0CU10"/>
<dbReference type="Proteomes" id="UP000002485">
    <property type="component" value="Chromosome I"/>
</dbReference>
<dbReference type="GO" id="GO:0005794">
    <property type="term" value="C:Golgi apparatus"/>
    <property type="evidence" value="ECO:0007005"/>
    <property type="project" value="PomBase"/>
</dbReference>
<dbReference type="GO" id="GO:0016020">
    <property type="term" value="C:membrane"/>
    <property type="evidence" value="ECO:0000305"/>
    <property type="project" value="PomBase"/>
</dbReference>
<dbReference type="GO" id="GO:0022857">
    <property type="term" value="F:transmembrane transporter activity"/>
    <property type="evidence" value="ECO:0000318"/>
    <property type="project" value="GO_Central"/>
</dbReference>
<dbReference type="GO" id="GO:0055085">
    <property type="term" value="P:transmembrane transport"/>
    <property type="evidence" value="ECO:0000318"/>
    <property type="project" value="GO_Central"/>
</dbReference>
<dbReference type="CDD" id="cd17323">
    <property type="entry name" value="MFS_Tpo1_MDR_like"/>
    <property type="match status" value="1"/>
</dbReference>
<dbReference type="FunFam" id="1.20.1250.20:FF:000509">
    <property type="entry name" value="MFS general substrate transporter"/>
    <property type="match status" value="1"/>
</dbReference>
<dbReference type="Gene3D" id="1.20.1250.20">
    <property type="entry name" value="MFS general substrate transporter like domains"/>
    <property type="match status" value="1"/>
</dbReference>
<dbReference type="InterPro" id="IPR011701">
    <property type="entry name" value="MFS"/>
</dbReference>
<dbReference type="InterPro" id="IPR020846">
    <property type="entry name" value="MFS_dom"/>
</dbReference>
<dbReference type="InterPro" id="IPR036259">
    <property type="entry name" value="MFS_trans_sf"/>
</dbReference>
<dbReference type="PANTHER" id="PTHR23502">
    <property type="entry name" value="MAJOR FACILITATOR SUPERFAMILY"/>
    <property type="match status" value="1"/>
</dbReference>
<dbReference type="PANTHER" id="PTHR23502:SF189">
    <property type="entry name" value="MEMBRANE TRANSPORTER"/>
    <property type="match status" value="1"/>
</dbReference>
<dbReference type="Pfam" id="PF07690">
    <property type="entry name" value="MFS_1"/>
    <property type="match status" value="1"/>
</dbReference>
<dbReference type="SUPFAM" id="SSF103473">
    <property type="entry name" value="MFS general substrate transporter"/>
    <property type="match status" value="1"/>
</dbReference>
<dbReference type="PROSITE" id="PS50850">
    <property type="entry name" value="MFS"/>
    <property type="match status" value="1"/>
</dbReference>